<sequence>MTEFSKTPLLDTIRTPEDLRKLRIDQVRQVADELRLETIDAVSVTGGHFGAGLGVVELTTALHYVFDTPRDRLIWDVGHQAYPHKILTGRRDRIRTLRTGGGLSGFTKRTESDHDPFGAGHSSTSISAGLGMAVASELAGKKNNVIAVIGDGSISAGMAYEAMNNAGAMNSRLIVILNDNNMSIAPPVGAMSAYLSRLYSGKTYRSLREAGKQIGKHLPKLIADRAARAEEYSRGFMMGGGTLFEELGFYYVGPVDGHNLDHLLPILQNVRDADTGPFLIHVVTQKGKGYGPAEAAADKYHAVVKFDIATGAQAKAKSNAPSYQNVFGQSLVKEAQKDDKIVGITAAMPSGTGIDIFEKAFPKRTFDVGIAEQHAVTFAAGLATEGYKPFCAIYSTFLQRAYDQIVHDVAIQKLPVRFAIDRAGLVGADGATHAGSFDNAYLGCLPNMVIMAAADEAELVHMVATQVAIDDRPSAVRYPRGEGRGVEMPEVGIPLEIGKGRVIRQGNKVALLSFGTRLAEAEKAADELATLGLSTTVADARFMKPLDVELVLKLARDHEVLLTIEEGSIGGFGSHVMQTLAEHGMLDGEVKMRALVLPDVFMDHDNPVAMYARAGLDAKAIVKKVFDVLGKDAATETSKLA</sequence>
<dbReference type="EC" id="2.2.1.7" evidence="1"/>
<dbReference type="EMBL" id="CP001096">
    <property type="protein sequence ID" value="ACE99578.1"/>
    <property type="molecule type" value="Genomic_DNA"/>
</dbReference>
<dbReference type="RefSeq" id="WP_011156487.1">
    <property type="nucleotide sequence ID" value="NC_011004.1"/>
</dbReference>
<dbReference type="SMR" id="B3QFY7"/>
<dbReference type="GeneID" id="66891971"/>
<dbReference type="KEGG" id="rpt:Rpal_1022"/>
<dbReference type="HOGENOM" id="CLU_009227_1_4_5"/>
<dbReference type="OrthoDB" id="9803371at2"/>
<dbReference type="UniPathway" id="UPA00064">
    <property type="reaction ID" value="UER00091"/>
</dbReference>
<dbReference type="Proteomes" id="UP000001725">
    <property type="component" value="Chromosome"/>
</dbReference>
<dbReference type="GO" id="GO:0008661">
    <property type="term" value="F:1-deoxy-D-xylulose-5-phosphate synthase activity"/>
    <property type="evidence" value="ECO:0007669"/>
    <property type="project" value="UniProtKB-UniRule"/>
</dbReference>
<dbReference type="GO" id="GO:0000287">
    <property type="term" value="F:magnesium ion binding"/>
    <property type="evidence" value="ECO:0007669"/>
    <property type="project" value="UniProtKB-UniRule"/>
</dbReference>
<dbReference type="GO" id="GO:0030976">
    <property type="term" value="F:thiamine pyrophosphate binding"/>
    <property type="evidence" value="ECO:0007669"/>
    <property type="project" value="UniProtKB-UniRule"/>
</dbReference>
<dbReference type="GO" id="GO:0052865">
    <property type="term" value="P:1-deoxy-D-xylulose 5-phosphate biosynthetic process"/>
    <property type="evidence" value="ECO:0007669"/>
    <property type="project" value="UniProtKB-UniPathway"/>
</dbReference>
<dbReference type="GO" id="GO:0019682">
    <property type="term" value="P:glyceraldehyde-3-phosphate metabolic process"/>
    <property type="evidence" value="ECO:0007669"/>
    <property type="project" value="UniProtKB-ARBA"/>
</dbReference>
<dbReference type="GO" id="GO:0016114">
    <property type="term" value="P:terpenoid biosynthetic process"/>
    <property type="evidence" value="ECO:0007669"/>
    <property type="project" value="UniProtKB-UniRule"/>
</dbReference>
<dbReference type="GO" id="GO:0009228">
    <property type="term" value="P:thiamine biosynthetic process"/>
    <property type="evidence" value="ECO:0007669"/>
    <property type="project" value="UniProtKB-UniRule"/>
</dbReference>
<dbReference type="CDD" id="cd02007">
    <property type="entry name" value="TPP_DXS"/>
    <property type="match status" value="1"/>
</dbReference>
<dbReference type="CDD" id="cd07033">
    <property type="entry name" value="TPP_PYR_DXS_TK_like"/>
    <property type="match status" value="1"/>
</dbReference>
<dbReference type="FunFam" id="3.40.50.920:FF:000002">
    <property type="entry name" value="1-deoxy-D-xylulose-5-phosphate synthase"/>
    <property type="match status" value="1"/>
</dbReference>
<dbReference type="FunFam" id="3.40.50.970:FF:000005">
    <property type="entry name" value="1-deoxy-D-xylulose-5-phosphate synthase"/>
    <property type="match status" value="1"/>
</dbReference>
<dbReference type="Gene3D" id="3.40.50.920">
    <property type="match status" value="1"/>
</dbReference>
<dbReference type="Gene3D" id="3.40.50.970">
    <property type="match status" value="2"/>
</dbReference>
<dbReference type="HAMAP" id="MF_00315">
    <property type="entry name" value="DXP_synth"/>
    <property type="match status" value="1"/>
</dbReference>
<dbReference type="InterPro" id="IPR005477">
    <property type="entry name" value="Dxylulose-5-P_synthase"/>
</dbReference>
<dbReference type="InterPro" id="IPR029061">
    <property type="entry name" value="THDP-binding"/>
</dbReference>
<dbReference type="InterPro" id="IPR009014">
    <property type="entry name" value="Transketo_C/PFOR_II"/>
</dbReference>
<dbReference type="InterPro" id="IPR005475">
    <property type="entry name" value="Transketolase-like_Pyr-bd"/>
</dbReference>
<dbReference type="InterPro" id="IPR020826">
    <property type="entry name" value="Transketolase_BS"/>
</dbReference>
<dbReference type="InterPro" id="IPR033248">
    <property type="entry name" value="Transketolase_C"/>
</dbReference>
<dbReference type="InterPro" id="IPR049557">
    <property type="entry name" value="Transketolase_CS"/>
</dbReference>
<dbReference type="NCBIfam" id="TIGR00204">
    <property type="entry name" value="dxs"/>
    <property type="match status" value="1"/>
</dbReference>
<dbReference type="NCBIfam" id="NF003933">
    <property type="entry name" value="PRK05444.2-2"/>
    <property type="match status" value="1"/>
</dbReference>
<dbReference type="PANTHER" id="PTHR43322">
    <property type="entry name" value="1-D-DEOXYXYLULOSE 5-PHOSPHATE SYNTHASE-RELATED"/>
    <property type="match status" value="1"/>
</dbReference>
<dbReference type="PANTHER" id="PTHR43322:SF5">
    <property type="entry name" value="1-DEOXY-D-XYLULOSE-5-PHOSPHATE SYNTHASE, CHLOROPLASTIC"/>
    <property type="match status" value="1"/>
</dbReference>
<dbReference type="Pfam" id="PF13292">
    <property type="entry name" value="DXP_synthase_N"/>
    <property type="match status" value="1"/>
</dbReference>
<dbReference type="Pfam" id="PF02779">
    <property type="entry name" value="Transket_pyr"/>
    <property type="match status" value="1"/>
</dbReference>
<dbReference type="Pfam" id="PF02780">
    <property type="entry name" value="Transketolase_C"/>
    <property type="match status" value="1"/>
</dbReference>
<dbReference type="SMART" id="SM00861">
    <property type="entry name" value="Transket_pyr"/>
    <property type="match status" value="1"/>
</dbReference>
<dbReference type="SUPFAM" id="SSF52518">
    <property type="entry name" value="Thiamin diphosphate-binding fold (THDP-binding)"/>
    <property type="match status" value="2"/>
</dbReference>
<dbReference type="SUPFAM" id="SSF52922">
    <property type="entry name" value="TK C-terminal domain-like"/>
    <property type="match status" value="1"/>
</dbReference>
<dbReference type="PROSITE" id="PS00801">
    <property type="entry name" value="TRANSKETOLASE_1"/>
    <property type="match status" value="1"/>
</dbReference>
<dbReference type="PROSITE" id="PS00802">
    <property type="entry name" value="TRANSKETOLASE_2"/>
    <property type="match status" value="1"/>
</dbReference>
<evidence type="ECO:0000255" key="1">
    <source>
        <dbReference type="HAMAP-Rule" id="MF_00315"/>
    </source>
</evidence>
<accession>B3QFY7</accession>
<gene>
    <name evidence="1" type="primary">dxs</name>
    <name type="ordered locus">Rpal_1022</name>
</gene>
<name>DXS_RHOPT</name>
<reference key="1">
    <citation type="submission" date="2008-05" db="EMBL/GenBank/DDBJ databases">
        <title>Complete sequence of Rhodopseudomonas palustris TIE-1.</title>
        <authorList>
            <consortium name="US DOE Joint Genome Institute"/>
            <person name="Lucas S."/>
            <person name="Copeland A."/>
            <person name="Lapidus A."/>
            <person name="Glavina del Rio T."/>
            <person name="Dalin E."/>
            <person name="Tice H."/>
            <person name="Pitluck S."/>
            <person name="Chain P."/>
            <person name="Malfatti S."/>
            <person name="Shin M."/>
            <person name="Vergez L."/>
            <person name="Lang D."/>
            <person name="Schmutz J."/>
            <person name="Larimer F."/>
            <person name="Land M."/>
            <person name="Hauser L."/>
            <person name="Kyrpides N."/>
            <person name="Mikhailova N."/>
            <person name="Emerson D."/>
            <person name="Newman D.K."/>
            <person name="Roden E."/>
            <person name="Richardson P."/>
        </authorList>
    </citation>
    <scope>NUCLEOTIDE SEQUENCE [LARGE SCALE GENOMIC DNA]</scope>
    <source>
        <strain>TIE-1</strain>
    </source>
</reference>
<protein>
    <recommendedName>
        <fullName evidence="1">1-deoxy-D-xylulose-5-phosphate synthase</fullName>
        <ecNumber evidence="1">2.2.1.7</ecNumber>
    </recommendedName>
    <alternativeName>
        <fullName evidence="1">1-deoxyxylulose-5-phosphate synthase</fullName>
        <shortName evidence="1">DXP synthase</shortName>
        <shortName evidence="1">DXPS</shortName>
    </alternativeName>
</protein>
<feature type="chain" id="PRO_1000115763" description="1-deoxy-D-xylulose-5-phosphate synthase">
    <location>
        <begin position="1"/>
        <end position="641"/>
    </location>
</feature>
<feature type="binding site" evidence="1">
    <location>
        <position position="79"/>
    </location>
    <ligand>
        <name>thiamine diphosphate</name>
        <dbReference type="ChEBI" id="CHEBI:58937"/>
    </ligand>
</feature>
<feature type="binding site" evidence="1">
    <location>
        <begin position="120"/>
        <end position="122"/>
    </location>
    <ligand>
        <name>thiamine diphosphate</name>
        <dbReference type="ChEBI" id="CHEBI:58937"/>
    </ligand>
</feature>
<feature type="binding site" evidence="1">
    <location>
        <position position="151"/>
    </location>
    <ligand>
        <name>Mg(2+)</name>
        <dbReference type="ChEBI" id="CHEBI:18420"/>
    </ligand>
</feature>
<feature type="binding site" evidence="1">
    <location>
        <begin position="152"/>
        <end position="153"/>
    </location>
    <ligand>
        <name>thiamine diphosphate</name>
        <dbReference type="ChEBI" id="CHEBI:58937"/>
    </ligand>
</feature>
<feature type="binding site" evidence="1">
    <location>
        <position position="180"/>
    </location>
    <ligand>
        <name>Mg(2+)</name>
        <dbReference type="ChEBI" id="CHEBI:18420"/>
    </ligand>
</feature>
<feature type="binding site" evidence="1">
    <location>
        <position position="180"/>
    </location>
    <ligand>
        <name>thiamine diphosphate</name>
        <dbReference type="ChEBI" id="CHEBI:58937"/>
    </ligand>
</feature>
<feature type="binding site" evidence="1">
    <location>
        <position position="290"/>
    </location>
    <ligand>
        <name>thiamine diphosphate</name>
        <dbReference type="ChEBI" id="CHEBI:58937"/>
    </ligand>
</feature>
<feature type="binding site" evidence="1">
    <location>
        <position position="372"/>
    </location>
    <ligand>
        <name>thiamine diphosphate</name>
        <dbReference type="ChEBI" id="CHEBI:58937"/>
    </ligand>
</feature>
<keyword id="KW-0414">Isoprene biosynthesis</keyword>
<keyword id="KW-0460">Magnesium</keyword>
<keyword id="KW-0479">Metal-binding</keyword>
<keyword id="KW-0784">Thiamine biosynthesis</keyword>
<keyword id="KW-0786">Thiamine pyrophosphate</keyword>
<keyword id="KW-0808">Transferase</keyword>
<proteinExistence type="inferred from homology"/>
<organism>
    <name type="scientific">Rhodopseudomonas palustris (strain TIE-1)</name>
    <dbReference type="NCBI Taxonomy" id="395960"/>
    <lineage>
        <taxon>Bacteria</taxon>
        <taxon>Pseudomonadati</taxon>
        <taxon>Pseudomonadota</taxon>
        <taxon>Alphaproteobacteria</taxon>
        <taxon>Hyphomicrobiales</taxon>
        <taxon>Nitrobacteraceae</taxon>
        <taxon>Rhodopseudomonas</taxon>
    </lineage>
</organism>
<comment type="function">
    <text evidence="1">Catalyzes the acyloin condensation reaction between C atoms 2 and 3 of pyruvate and glyceraldehyde 3-phosphate to yield 1-deoxy-D-xylulose-5-phosphate (DXP).</text>
</comment>
<comment type="catalytic activity">
    <reaction evidence="1">
        <text>D-glyceraldehyde 3-phosphate + pyruvate + H(+) = 1-deoxy-D-xylulose 5-phosphate + CO2</text>
        <dbReference type="Rhea" id="RHEA:12605"/>
        <dbReference type="ChEBI" id="CHEBI:15361"/>
        <dbReference type="ChEBI" id="CHEBI:15378"/>
        <dbReference type="ChEBI" id="CHEBI:16526"/>
        <dbReference type="ChEBI" id="CHEBI:57792"/>
        <dbReference type="ChEBI" id="CHEBI:59776"/>
        <dbReference type="EC" id="2.2.1.7"/>
    </reaction>
</comment>
<comment type="cofactor">
    <cofactor evidence="1">
        <name>Mg(2+)</name>
        <dbReference type="ChEBI" id="CHEBI:18420"/>
    </cofactor>
    <text evidence="1">Binds 1 Mg(2+) ion per subunit.</text>
</comment>
<comment type="cofactor">
    <cofactor evidence="1">
        <name>thiamine diphosphate</name>
        <dbReference type="ChEBI" id="CHEBI:58937"/>
    </cofactor>
    <text evidence="1">Binds 1 thiamine pyrophosphate per subunit.</text>
</comment>
<comment type="pathway">
    <text evidence="1">Metabolic intermediate biosynthesis; 1-deoxy-D-xylulose 5-phosphate biosynthesis; 1-deoxy-D-xylulose 5-phosphate from D-glyceraldehyde 3-phosphate and pyruvate: step 1/1.</text>
</comment>
<comment type="subunit">
    <text evidence="1">Homodimer.</text>
</comment>
<comment type="similarity">
    <text evidence="1">Belongs to the transketolase family. DXPS subfamily.</text>
</comment>